<organism>
    <name type="scientific">Mycolicibacterium gilvum (strain PYR-GCK)</name>
    <name type="common">Mycobacterium gilvum (strain PYR-GCK)</name>
    <dbReference type="NCBI Taxonomy" id="350054"/>
    <lineage>
        <taxon>Bacteria</taxon>
        <taxon>Bacillati</taxon>
        <taxon>Actinomycetota</taxon>
        <taxon>Actinomycetes</taxon>
        <taxon>Mycobacteriales</taxon>
        <taxon>Mycobacteriaceae</taxon>
        <taxon>Mycolicibacterium</taxon>
    </lineage>
</organism>
<evidence type="ECO:0000255" key="1">
    <source>
        <dbReference type="HAMAP-Rule" id="MF_00632"/>
    </source>
</evidence>
<proteinExistence type="inferred from homology"/>
<protein>
    <recommendedName>
        <fullName evidence="1">Nucleotide-binding protein Mflv_5248</fullName>
    </recommendedName>
</protein>
<gene>
    <name type="ordered locus">Mflv_5248</name>
</gene>
<name>Y5248_MYCGI</name>
<feature type="chain" id="PRO_1000082629" description="Nucleotide-binding protein Mflv_5248">
    <location>
        <begin position="1"/>
        <end position="163"/>
    </location>
</feature>
<comment type="function">
    <text evidence="1">Nucleotide-binding protein.</text>
</comment>
<comment type="similarity">
    <text evidence="1">Belongs to the YajQ family.</text>
</comment>
<keyword id="KW-0547">Nucleotide-binding</keyword>
<sequence length="163" mass="18108">MADSSFDIVSKVDRQEVDNALNQAAKELATRFDFRGTDTTIEWQGEEGIILVSSTEERVKAAVDVFKEKLIRRDISMKAFDAGDPQPSGKTYKVIGSIKQGISSEDAKKVTKLIRDEGPKGVKAQIQGEEIRVSSKKRDDLQAVQALLRGADLDFAVQFVNYR</sequence>
<accession>A4T197</accession>
<dbReference type="EMBL" id="CP000656">
    <property type="protein sequence ID" value="ABP47712.1"/>
    <property type="molecule type" value="Genomic_DNA"/>
</dbReference>
<dbReference type="SMR" id="A4T197"/>
<dbReference type="STRING" id="350054.Mflv_5248"/>
<dbReference type="KEGG" id="mgi:Mflv_5248"/>
<dbReference type="eggNOG" id="COG1666">
    <property type="taxonomic scope" value="Bacteria"/>
</dbReference>
<dbReference type="HOGENOM" id="CLU_099839_0_0_11"/>
<dbReference type="OrthoDB" id="9801447at2"/>
<dbReference type="GO" id="GO:0005829">
    <property type="term" value="C:cytosol"/>
    <property type="evidence" value="ECO:0007669"/>
    <property type="project" value="TreeGrafter"/>
</dbReference>
<dbReference type="GO" id="GO:0000166">
    <property type="term" value="F:nucleotide binding"/>
    <property type="evidence" value="ECO:0007669"/>
    <property type="project" value="TreeGrafter"/>
</dbReference>
<dbReference type="CDD" id="cd11740">
    <property type="entry name" value="YajQ_like"/>
    <property type="match status" value="1"/>
</dbReference>
<dbReference type="FunFam" id="3.30.70.860:FF:000004">
    <property type="entry name" value="UPF0234 protein AWC22_11905"/>
    <property type="match status" value="1"/>
</dbReference>
<dbReference type="Gene3D" id="3.30.70.860">
    <property type="match status" value="1"/>
</dbReference>
<dbReference type="Gene3D" id="3.30.70.990">
    <property type="entry name" value="YajQ-like, domain 2"/>
    <property type="match status" value="1"/>
</dbReference>
<dbReference type="HAMAP" id="MF_00632">
    <property type="entry name" value="YajQ"/>
    <property type="match status" value="1"/>
</dbReference>
<dbReference type="InterPro" id="IPR007551">
    <property type="entry name" value="DUF520"/>
</dbReference>
<dbReference type="InterPro" id="IPR035571">
    <property type="entry name" value="UPF0234-like_C"/>
</dbReference>
<dbReference type="InterPro" id="IPR035570">
    <property type="entry name" value="UPF0234_N"/>
</dbReference>
<dbReference type="InterPro" id="IPR036183">
    <property type="entry name" value="YajQ-like_sf"/>
</dbReference>
<dbReference type="NCBIfam" id="NF003819">
    <property type="entry name" value="PRK05412.1"/>
    <property type="match status" value="1"/>
</dbReference>
<dbReference type="PANTHER" id="PTHR30476">
    <property type="entry name" value="UPF0234 PROTEIN YAJQ"/>
    <property type="match status" value="1"/>
</dbReference>
<dbReference type="PANTHER" id="PTHR30476:SF0">
    <property type="entry name" value="UPF0234 PROTEIN YAJQ"/>
    <property type="match status" value="1"/>
</dbReference>
<dbReference type="Pfam" id="PF04461">
    <property type="entry name" value="DUF520"/>
    <property type="match status" value="1"/>
</dbReference>
<dbReference type="SUPFAM" id="SSF89963">
    <property type="entry name" value="YajQ-like"/>
    <property type="match status" value="2"/>
</dbReference>
<reference key="1">
    <citation type="submission" date="2007-04" db="EMBL/GenBank/DDBJ databases">
        <title>Complete sequence of chromosome of Mycobacterium gilvum PYR-GCK.</title>
        <authorList>
            <consortium name="US DOE Joint Genome Institute"/>
            <person name="Copeland A."/>
            <person name="Lucas S."/>
            <person name="Lapidus A."/>
            <person name="Barry K."/>
            <person name="Detter J.C."/>
            <person name="Glavina del Rio T."/>
            <person name="Hammon N."/>
            <person name="Israni S."/>
            <person name="Dalin E."/>
            <person name="Tice H."/>
            <person name="Pitluck S."/>
            <person name="Chain P."/>
            <person name="Malfatti S."/>
            <person name="Shin M."/>
            <person name="Vergez L."/>
            <person name="Schmutz J."/>
            <person name="Larimer F."/>
            <person name="Land M."/>
            <person name="Hauser L."/>
            <person name="Kyrpides N."/>
            <person name="Mikhailova N."/>
            <person name="Miller C."/>
            <person name="Richardson P."/>
        </authorList>
    </citation>
    <scope>NUCLEOTIDE SEQUENCE [LARGE SCALE GENOMIC DNA]</scope>
    <source>
        <strain>PYR-GCK</strain>
    </source>
</reference>